<accession>Q7V3V5</accession>
<dbReference type="EMBL" id="BX548175">
    <property type="protein sequence ID" value="CAE22407.1"/>
    <property type="molecule type" value="Genomic_DNA"/>
</dbReference>
<dbReference type="RefSeq" id="WP_011131597.1">
    <property type="nucleotide sequence ID" value="NC_005071.1"/>
</dbReference>
<dbReference type="SMR" id="Q7V3V5"/>
<dbReference type="KEGG" id="pmt:PMT_2233"/>
<dbReference type="eggNOG" id="COG0829">
    <property type="taxonomic scope" value="Bacteria"/>
</dbReference>
<dbReference type="HOGENOM" id="CLU_056339_4_0_3"/>
<dbReference type="OrthoDB" id="9798842at2"/>
<dbReference type="Proteomes" id="UP000001423">
    <property type="component" value="Chromosome"/>
</dbReference>
<dbReference type="GO" id="GO:0005737">
    <property type="term" value="C:cytoplasm"/>
    <property type="evidence" value="ECO:0007669"/>
    <property type="project" value="UniProtKB-SubCell"/>
</dbReference>
<dbReference type="GO" id="GO:0016151">
    <property type="term" value="F:nickel cation binding"/>
    <property type="evidence" value="ECO:0007669"/>
    <property type="project" value="UniProtKB-UniRule"/>
</dbReference>
<dbReference type="HAMAP" id="MF_01384">
    <property type="entry name" value="UreD"/>
    <property type="match status" value="1"/>
</dbReference>
<dbReference type="InterPro" id="IPR002669">
    <property type="entry name" value="UreD"/>
</dbReference>
<dbReference type="PANTHER" id="PTHR33643">
    <property type="entry name" value="UREASE ACCESSORY PROTEIN D"/>
    <property type="match status" value="1"/>
</dbReference>
<dbReference type="PANTHER" id="PTHR33643:SF1">
    <property type="entry name" value="UREASE ACCESSORY PROTEIN D"/>
    <property type="match status" value="1"/>
</dbReference>
<dbReference type="Pfam" id="PF01774">
    <property type="entry name" value="UreD"/>
    <property type="match status" value="1"/>
</dbReference>
<keyword id="KW-0143">Chaperone</keyword>
<keyword id="KW-0963">Cytoplasm</keyword>
<keyword id="KW-0996">Nickel insertion</keyword>
<keyword id="KW-1185">Reference proteome</keyword>
<protein>
    <recommendedName>
        <fullName evidence="1">Urease accessory protein UreD</fullName>
    </recommendedName>
</protein>
<proteinExistence type="inferred from homology"/>
<name>URED_PROMM</name>
<reference key="1">
    <citation type="journal article" date="2003" name="Nature">
        <title>Genome divergence in two Prochlorococcus ecotypes reflects oceanic niche differentiation.</title>
        <authorList>
            <person name="Rocap G."/>
            <person name="Larimer F.W."/>
            <person name="Lamerdin J.E."/>
            <person name="Malfatti S."/>
            <person name="Chain P."/>
            <person name="Ahlgren N.A."/>
            <person name="Arellano A."/>
            <person name="Coleman M."/>
            <person name="Hauser L."/>
            <person name="Hess W.R."/>
            <person name="Johnson Z.I."/>
            <person name="Land M.L."/>
            <person name="Lindell D."/>
            <person name="Post A.F."/>
            <person name="Regala W."/>
            <person name="Shah M."/>
            <person name="Shaw S.L."/>
            <person name="Steglich C."/>
            <person name="Sullivan M.B."/>
            <person name="Ting C.S."/>
            <person name="Tolonen A."/>
            <person name="Webb E.A."/>
            <person name="Zinser E.R."/>
            <person name="Chisholm S.W."/>
        </authorList>
    </citation>
    <scope>NUCLEOTIDE SEQUENCE [LARGE SCALE GENOMIC DNA]</scope>
    <source>
        <strain>MIT 9313</strain>
    </source>
</reference>
<organism>
    <name type="scientific">Prochlorococcus marinus (strain MIT 9313)</name>
    <dbReference type="NCBI Taxonomy" id="74547"/>
    <lineage>
        <taxon>Bacteria</taxon>
        <taxon>Bacillati</taxon>
        <taxon>Cyanobacteriota</taxon>
        <taxon>Cyanophyceae</taxon>
        <taxon>Synechococcales</taxon>
        <taxon>Prochlorococcaceae</taxon>
        <taxon>Prochlorococcus</taxon>
    </lineage>
</organism>
<feature type="chain" id="PRO_0000340479" description="Urease accessory protein UreD">
    <location>
        <begin position="1"/>
        <end position="319"/>
    </location>
</feature>
<feature type="region of interest" description="Disordered" evidence="2">
    <location>
        <begin position="284"/>
        <end position="319"/>
    </location>
</feature>
<gene>
    <name evidence="1" type="primary">ureD</name>
    <name type="ordered locus">PMT_2233</name>
</gene>
<evidence type="ECO:0000255" key="1">
    <source>
        <dbReference type="HAMAP-Rule" id="MF_01384"/>
    </source>
</evidence>
<evidence type="ECO:0000256" key="2">
    <source>
        <dbReference type="SAM" id="MobiDB-lite"/>
    </source>
</evidence>
<sequence length="319" mass="35442">MTGDRPWHGQCSLQLISKTATDDLQSQLTVHQSQCTAPFKIQRANLDHDGRCQLPLLHTAGGLVGGDQLSVNVKAGADSRGLVTSVAAQKVYGSVGRSKQHPKGRWASQECHFELETNADLEWLPQELVVFQGGLYKQRMQVELQPKASFLCAEVVRLGRTAAGETLNEGAWRSSLEICRQTPIGRQWELVDQLELNSEVLQSLHGMGTQPVFGSFVWAAPHPLTADVMEILLRNCRTDRANLEGSMACGGLDQGLVARYIGPSSQAARQWFSRLWARTRQLRRLSTPQPPREWPLQEEGTFSNERFTKDHQSPSASPH</sequence>
<comment type="function">
    <text evidence="1">Required for maturation of urease via the functional incorporation of the urease nickel metallocenter.</text>
</comment>
<comment type="subunit">
    <text evidence="1">UreD, UreF and UreG form a complex that acts as a GTP-hydrolysis-dependent molecular chaperone, activating the urease apoprotein by helping to assemble the nickel containing metallocenter of UreC. The UreE protein probably delivers the nickel.</text>
</comment>
<comment type="subcellular location">
    <subcellularLocation>
        <location evidence="1">Cytoplasm</location>
    </subcellularLocation>
</comment>
<comment type="similarity">
    <text evidence="1">Belongs to the UreD family.</text>
</comment>